<gene>
    <name evidence="5" type="primary">PCNA1</name>
    <name evidence="6" type="synonym">PCNA</name>
</gene>
<dbReference type="EMBL" id="X68739">
    <property type="protein sequence ID" value="CAA48673.1"/>
    <property type="molecule type" value="Genomic_DNA"/>
</dbReference>
<dbReference type="PIR" id="S30224">
    <property type="entry name" value="S30224"/>
</dbReference>
<dbReference type="SMR" id="P31008"/>
<dbReference type="GO" id="GO:0005694">
    <property type="term" value="C:chromosome"/>
    <property type="evidence" value="ECO:0007669"/>
    <property type="project" value="UniProtKB-SubCell"/>
</dbReference>
<dbReference type="GO" id="GO:0005737">
    <property type="term" value="C:cytoplasm"/>
    <property type="evidence" value="ECO:0007669"/>
    <property type="project" value="UniProtKB-SubCell"/>
</dbReference>
<dbReference type="GO" id="GO:0043626">
    <property type="term" value="C:PCNA complex"/>
    <property type="evidence" value="ECO:0007669"/>
    <property type="project" value="TreeGrafter"/>
</dbReference>
<dbReference type="GO" id="GO:0003677">
    <property type="term" value="F:DNA binding"/>
    <property type="evidence" value="ECO:0007669"/>
    <property type="project" value="UniProtKB-KW"/>
</dbReference>
<dbReference type="GO" id="GO:0030337">
    <property type="term" value="F:DNA polymerase processivity factor activity"/>
    <property type="evidence" value="ECO:0000314"/>
    <property type="project" value="UniProtKB"/>
</dbReference>
<dbReference type="GO" id="GO:0006272">
    <property type="term" value="P:leading strand elongation"/>
    <property type="evidence" value="ECO:0007669"/>
    <property type="project" value="TreeGrafter"/>
</dbReference>
<dbReference type="GO" id="GO:0006298">
    <property type="term" value="P:mismatch repair"/>
    <property type="evidence" value="ECO:0007669"/>
    <property type="project" value="TreeGrafter"/>
</dbReference>
<dbReference type="GO" id="GO:1900264">
    <property type="term" value="P:positive regulation of DNA-directed DNA polymerase activity"/>
    <property type="evidence" value="ECO:0000314"/>
    <property type="project" value="UniProtKB"/>
</dbReference>
<dbReference type="GO" id="GO:0006275">
    <property type="term" value="P:regulation of DNA replication"/>
    <property type="evidence" value="ECO:0007669"/>
    <property type="project" value="InterPro"/>
</dbReference>
<dbReference type="GO" id="GO:0019985">
    <property type="term" value="P:translesion synthesis"/>
    <property type="evidence" value="ECO:0007669"/>
    <property type="project" value="TreeGrafter"/>
</dbReference>
<dbReference type="CDD" id="cd00577">
    <property type="entry name" value="PCNA"/>
    <property type="match status" value="1"/>
</dbReference>
<dbReference type="FunFam" id="3.10.150.10:FF:000006">
    <property type="entry name" value="Proliferating cell nuclear antigen"/>
    <property type="match status" value="1"/>
</dbReference>
<dbReference type="FunFam" id="3.10.150.10:FF:000010">
    <property type="entry name" value="Proliferating cell nuclear antigen"/>
    <property type="match status" value="1"/>
</dbReference>
<dbReference type="Gene3D" id="3.10.150.10">
    <property type="entry name" value="DNA Polymerase III, subunit A, domain 2"/>
    <property type="match status" value="2"/>
</dbReference>
<dbReference type="HAMAP" id="MF_00317">
    <property type="entry name" value="DNApol_clamp_arch"/>
    <property type="match status" value="1"/>
</dbReference>
<dbReference type="InterPro" id="IPR046938">
    <property type="entry name" value="DNA_clamp_sf"/>
</dbReference>
<dbReference type="InterPro" id="IPR000730">
    <property type="entry name" value="Pr_cel_nuc_antig"/>
</dbReference>
<dbReference type="InterPro" id="IPR022649">
    <property type="entry name" value="Pr_cel_nuc_antig_C"/>
</dbReference>
<dbReference type="InterPro" id="IPR022659">
    <property type="entry name" value="Pr_cel_nuc_antig_CS"/>
</dbReference>
<dbReference type="InterPro" id="IPR022648">
    <property type="entry name" value="Pr_cel_nuc_antig_N"/>
</dbReference>
<dbReference type="NCBIfam" id="TIGR00590">
    <property type="entry name" value="pcna"/>
    <property type="match status" value="1"/>
</dbReference>
<dbReference type="PANTHER" id="PTHR11352">
    <property type="entry name" value="PROLIFERATING CELL NUCLEAR ANTIGEN"/>
    <property type="match status" value="1"/>
</dbReference>
<dbReference type="PANTHER" id="PTHR11352:SF0">
    <property type="entry name" value="PROLIFERATING CELL NUCLEAR ANTIGEN"/>
    <property type="match status" value="1"/>
</dbReference>
<dbReference type="Pfam" id="PF02747">
    <property type="entry name" value="PCNA_C"/>
    <property type="match status" value="1"/>
</dbReference>
<dbReference type="Pfam" id="PF00705">
    <property type="entry name" value="PCNA_N"/>
    <property type="match status" value="1"/>
</dbReference>
<dbReference type="PRINTS" id="PR00339">
    <property type="entry name" value="PCNACYCLIN"/>
</dbReference>
<dbReference type="SUPFAM" id="SSF55979">
    <property type="entry name" value="DNA clamp"/>
    <property type="match status" value="2"/>
</dbReference>
<dbReference type="PROSITE" id="PS01251">
    <property type="entry name" value="PCNA_1"/>
    <property type="match status" value="1"/>
</dbReference>
<dbReference type="PROSITE" id="PS00293">
    <property type="entry name" value="PCNA_2"/>
    <property type="match status" value="1"/>
</dbReference>
<reference key="1">
    <citation type="journal article" date="1993" name="Nucleic Acids Res.">
        <title>Molecular characterisation and stage-specific expression of proliferating cell nuclear antigen (PCNA) from the malarial parasite, Plasmodium falciparum.</title>
        <authorList>
            <person name="Kilbey B.J."/>
            <person name="Fraser I."/>
            <person name="McAleese S."/>
            <person name="Goman M."/>
            <person name="Ridley R.G."/>
        </authorList>
    </citation>
    <scope>NUCLEOTIDE SEQUENCE [GENOMIC DNA]</scope>
</reference>
<reference key="2">
    <citation type="journal article" date="1996" name="Mol. Biochem. Parasitol.">
        <title>Stage specific expression of proliferating cell nuclear antigen and DNA polymerase delta from Plasmodium falciparum.</title>
        <authorList>
            <person name="Horrocks P."/>
            <person name="Jackson M."/>
            <person name="Cheesman S."/>
            <person name="White J.H."/>
            <person name="Kilbey B.J."/>
        </authorList>
    </citation>
    <scope>DEVELOPMENTAL STAGE</scope>
</reference>
<reference key="3">
    <citation type="journal article" date="2016" name="Malar. J.">
        <title>Biochemical and functional characterization of Plasmodium falciparum DNA polymerase delta.</title>
        <authorList>
            <person name="Vasuvat J."/>
            <person name="Montree A."/>
            <person name="Moonsom S."/>
            <person name="Leartsakulpanich U."/>
            <person name="Petmitr S."/>
            <person name="Focher F."/>
            <person name="Wright G.E."/>
            <person name="Chavalitshewinkoon-Petmitr P."/>
        </authorList>
    </citation>
    <scope>FUNCTION</scope>
</reference>
<comment type="function">
    <text evidence="1 3">Auxiliary protein of DNA polymerase delta and is involved in the control of DNA replication by increasing the polymerase processibility during elongation of the leading strand (PubMed:26911594). Involved in DNA damage response (By similarity).</text>
</comment>
<comment type="subunit">
    <text evidence="1">Homotrimer. Interacts with ORC1 (via PIP-box motif); the interaction occurs during DNA replication in trophozoites. Interacts with ORC5; the interaction occurs during the trophozoite stage but not at the late schizont stage. Interacts with FEN1.</text>
</comment>
<comment type="subcellular location">
    <subcellularLocation>
        <location evidence="1">Nucleus</location>
    </subcellularLocation>
    <subcellularLocation>
        <location evidence="1">Chromosome</location>
    </subcellularLocation>
    <subcellularLocation>
        <location evidence="1">Cytoplasm</location>
    </subcellularLocation>
    <text evidence="1">During early-to mid replicating trophozoite stages, colocalizes with ORC1 and ORC5 to distinct nuclear foci which probably are DNA replication origin sites. Dissociates from ORC1 and ORC5 during the late schizont stage.</text>
</comment>
<comment type="developmental stage">
    <text evidence="4">Expressed during the asexual blood stage specifically in trophozoites and schizonts (at protein level).</text>
</comment>
<comment type="similarity">
    <text evidence="7">Belongs to the PCNA family.</text>
</comment>
<sequence>MLEAKLNNASILKKLFECIKDLVNDANVDADESGLKLQALDGNHVSLVSLHLLDSGFSHYRCDRERVLGVNIASLNKVFKLCGANESVVISSKDDEDNLNFVFENNKEDKVTNFSLKLMSIELDSLNIPDCEEGFDAEVELSSKELTNIFRNLSEFSDTVFIEIDSNCIKFTTKGIVGDAEVALKPRDSTSEDDIGVTIKSKKKIKQSFAIKYLNLFSKSNILADVVVLGLSDSRPIEFKYEIKDTSPDSDTLKIGFVKFFLAPKMDDDMDNKD</sequence>
<feature type="chain" id="PRO_0000149174" description="Proliferating cell nuclear antigen 1">
    <location>
        <begin position="1"/>
        <end position="274"/>
    </location>
</feature>
<feature type="DNA-binding region" evidence="2">
    <location>
        <begin position="61"/>
        <end position="80"/>
    </location>
</feature>
<feature type="site" description="May be important for nuclear localization" evidence="1">
    <location>
        <position position="213"/>
    </location>
</feature>
<protein>
    <recommendedName>
        <fullName evidence="5">Proliferating cell nuclear antigen 1</fullName>
        <shortName evidence="5">PfPCNA1</shortName>
    </recommendedName>
</protein>
<accession>P31008</accession>
<name>PCNA1_PLAFK</name>
<proteinExistence type="evidence at protein level"/>
<organism>
    <name type="scientific">Plasmodium falciparum (isolate K1 / Thailand)</name>
    <dbReference type="NCBI Taxonomy" id="5839"/>
    <lineage>
        <taxon>Eukaryota</taxon>
        <taxon>Sar</taxon>
        <taxon>Alveolata</taxon>
        <taxon>Apicomplexa</taxon>
        <taxon>Aconoidasida</taxon>
        <taxon>Haemosporida</taxon>
        <taxon>Plasmodiidae</taxon>
        <taxon>Plasmodium</taxon>
        <taxon>Plasmodium (Laverania)</taxon>
    </lineage>
</organism>
<evidence type="ECO:0000250" key="1">
    <source>
        <dbReference type="UniProtKB" id="P61074"/>
    </source>
</evidence>
<evidence type="ECO:0000255" key="2"/>
<evidence type="ECO:0000269" key="3">
    <source>
    </source>
</evidence>
<evidence type="ECO:0000269" key="4">
    <source>
    </source>
</evidence>
<evidence type="ECO:0000303" key="5">
    <source>
    </source>
</evidence>
<evidence type="ECO:0000303" key="6">
    <source>
    </source>
</evidence>
<evidence type="ECO:0000305" key="7"/>
<keyword id="KW-0158">Chromosome</keyword>
<keyword id="KW-0963">Cytoplasm</keyword>
<keyword id="KW-0235">DNA replication</keyword>
<keyword id="KW-0238">DNA-binding</keyword>
<keyword id="KW-0539">Nucleus</keyword>